<gene>
    <name evidence="2" type="primary">tuf1</name>
    <name type="ordered locus">Spea_0170</name>
</gene>
<gene>
    <name evidence="2" type="primary">tuf2</name>
    <name type="ordered locus">Spea_0182</name>
</gene>
<proteinExistence type="inferred from homology"/>
<sequence>MAKEKFERVKPHVNVGTIGHVDHGKTTLTAAISSVLTKTYGGTKRDFAQIDNAPEERERGITINTSHIEYDTPSRHYAHVDCPGHADYVKNMITGAAQMDGAILVVASTDGPMPQTREHILLSRQVGVPFIIVFMNKCDMVDDEELLELVEMEVRELLSEYDFPGDDLPVIQGSALKALEGEPEWEAKILELAEALDTYIPEPERAIDGAFILPIEDVFSIAGRGTVVTGRVERGIIKVGEEVEIVGIKDTTKSTCTGVEMFRKLLDEGRAGENCGVLLRGIKREDVERGQVLAAPGSITPHTTFKSEIYVLSKEEGGRHTPFFKGYRPQFYFRTTDVTGTIELPEGVEMVMPGDNVAMTVTLICPIAMDEGLRFAIREGGRTVGAGVVAEIVA</sequence>
<keyword id="KW-0963">Cytoplasm</keyword>
<keyword id="KW-0251">Elongation factor</keyword>
<keyword id="KW-0342">GTP-binding</keyword>
<keyword id="KW-0378">Hydrolase</keyword>
<keyword id="KW-0460">Magnesium</keyword>
<keyword id="KW-0479">Metal-binding</keyword>
<keyword id="KW-0547">Nucleotide-binding</keyword>
<keyword id="KW-0648">Protein biosynthesis</keyword>
<keyword id="KW-1185">Reference proteome</keyword>
<organism>
    <name type="scientific">Shewanella pealeana (strain ATCC 700345 / ANG-SQ1)</name>
    <dbReference type="NCBI Taxonomy" id="398579"/>
    <lineage>
        <taxon>Bacteria</taxon>
        <taxon>Pseudomonadati</taxon>
        <taxon>Pseudomonadota</taxon>
        <taxon>Gammaproteobacteria</taxon>
        <taxon>Alteromonadales</taxon>
        <taxon>Shewanellaceae</taxon>
        <taxon>Shewanella</taxon>
    </lineage>
</organism>
<accession>A8GYW2</accession>
<name>EFTU_SHEPA</name>
<evidence type="ECO:0000250" key="1"/>
<evidence type="ECO:0000255" key="2">
    <source>
        <dbReference type="HAMAP-Rule" id="MF_00118"/>
    </source>
</evidence>
<protein>
    <recommendedName>
        <fullName evidence="2">Elongation factor Tu</fullName>
        <shortName evidence="2">EF-Tu</shortName>
        <ecNumber evidence="2">3.6.5.3</ecNumber>
    </recommendedName>
</protein>
<dbReference type="EC" id="3.6.5.3" evidence="2"/>
<dbReference type="EMBL" id="CP000851">
    <property type="protein sequence ID" value="ABV85499.1"/>
    <property type="molecule type" value="Genomic_DNA"/>
</dbReference>
<dbReference type="EMBL" id="CP000851">
    <property type="protein sequence ID" value="ABV85511.1"/>
    <property type="molecule type" value="Genomic_DNA"/>
</dbReference>
<dbReference type="RefSeq" id="WP_012153445.1">
    <property type="nucleotide sequence ID" value="NC_009901.1"/>
</dbReference>
<dbReference type="SMR" id="A8GYW2"/>
<dbReference type="STRING" id="398579.Spea_0170"/>
<dbReference type="KEGG" id="spl:Spea_0170"/>
<dbReference type="KEGG" id="spl:Spea_0182"/>
<dbReference type="eggNOG" id="COG0050">
    <property type="taxonomic scope" value="Bacteria"/>
</dbReference>
<dbReference type="HOGENOM" id="CLU_007265_0_0_6"/>
<dbReference type="OrthoDB" id="9803139at2"/>
<dbReference type="Proteomes" id="UP000002608">
    <property type="component" value="Chromosome"/>
</dbReference>
<dbReference type="GO" id="GO:0005829">
    <property type="term" value="C:cytosol"/>
    <property type="evidence" value="ECO:0007669"/>
    <property type="project" value="TreeGrafter"/>
</dbReference>
<dbReference type="GO" id="GO:0005525">
    <property type="term" value="F:GTP binding"/>
    <property type="evidence" value="ECO:0007669"/>
    <property type="project" value="UniProtKB-UniRule"/>
</dbReference>
<dbReference type="GO" id="GO:0003924">
    <property type="term" value="F:GTPase activity"/>
    <property type="evidence" value="ECO:0007669"/>
    <property type="project" value="InterPro"/>
</dbReference>
<dbReference type="GO" id="GO:0097216">
    <property type="term" value="F:guanosine tetraphosphate binding"/>
    <property type="evidence" value="ECO:0007669"/>
    <property type="project" value="UniProtKB-ARBA"/>
</dbReference>
<dbReference type="GO" id="GO:0003746">
    <property type="term" value="F:translation elongation factor activity"/>
    <property type="evidence" value="ECO:0007669"/>
    <property type="project" value="UniProtKB-UniRule"/>
</dbReference>
<dbReference type="CDD" id="cd01884">
    <property type="entry name" value="EF_Tu"/>
    <property type="match status" value="1"/>
</dbReference>
<dbReference type="CDD" id="cd03697">
    <property type="entry name" value="EFTU_II"/>
    <property type="match status" value="1"/>
</dbReference>
<dbReference type="CDD" id="cd03707">
    <property type="entry name" value="EFTU_III"/>
    <property type="match status" value="1"/>
</dbReference>
<dbReference type="FunFam" id="2.40.30.10:FF:000001">
    <property type="entry name" value="Elongation factor Tu"/>
    <property type="match status" value="1"/>
</dbReference>
<dbReference type="FunFam" id="3.40.50.300:FF:000003">
    <property type="entry name" value="Elongation factor Tu"/>
    <property type="match status" value="1"/>
</dbReference>
<dbReference type="Gene3D" id="3.40.50.300">
    <property type="entry name" value="P-loop containing nucleotide triphosphate hydrolases"/>
    <property type="match status" value="1"/>
</dbReference>
<dbReference type="Gene3D" id="2.40.30.10">
    <property type="entry name" value="Translation factors"/>
    <property type="match status" value="2"/>
</dbReference>
<dbReference type="HAMAP" id="MF_00118_B">
    <property type="entry name" value="EF_Tu_B"/>
    <property type="match status" value="1"/>
</dbReference>
<dbReference type="InterPro" id="IPR041709">
    <property type="entry name" value="EF-Tu_GTP-bd"/>
</dbReference>
<dbReference type="InterPro" id="IPR050055">
    <property type="entry name" value="EF-Tu_GTPase"/>
</dbReference>
<dbReference type="InterPro" id="IPR004161">
    <property type="entry name" value="EFTu-like_2"/>
</dbReference>
<dbReference type="InterPro" id="IPR033720">
    <property type="entry name" value="EFTU_2"/>
</dbReference>
<dbReference type="InterPro" id="IPR031157">
    <property type="entry name" value="G_TR_CS"/>
</dbReference>
<dbReference type="InterPro" id="IPR027417">
    <property type="entry name" value="P-loop_NTPase"/>
</dbReference>
<dbReference type="InterPro" id="IPR005225">
    <property type="entry name" value="Small_GTP-bd"/>
</dbReference>
<dbReference type="InterPro" id="IPR000795">
    <property type="entry name" value="T_Tr_GTP-bd_dom"/>
</dbReference>
<dbReference type="InterPro" id="IPR009000">
    <property type="entry name" value="Transl_B-barrel_sf"/>
</dbReference>
<dbReference type="InterPro" id="IPR009001">
    <property type="entry name" value="Transl_elong_EF1A/Init_IF2_C"/>
</dbReference>
<dbReference type="InterPro" id="IPR004541">
    <property type="entry name" value="Transl_elong_EFTu/EF1A_bac/org"/>
</dbReference>
<dbReference type="InterPro" id="IPR004160">
    <property type="entry name" value="Transl_elong_EFTu/EF1A_C"/>
</dbReference>
<dbReference type="NCBIfam" id="TIGR00485">
    <property type="entry name" value="EF-Tu"/>
    <property type="match status" value="1"/>
</dbReference>
<dbReference type="NCBIfam" id="NF000766">
    <property type="entry name" value="PRK00049.1"/>
    <property type="match status" value="1"/>
</dbReference>
<dbReference type="NCBIfam" id="NF009372">
    <property type="entry name" value="PRK12735.1"/>
    <property type="match status" value="1"/>
</dbReference>
<dbReference type="NCBIfam" id="NF009373">
    <property type="entry name" value="PRK12736.1"/>
    <property type="match status" value="1"/>
</dbReference>
<dbReference type="NCBIfam" id="TIGR00231">
    <property type="entry name" value="small_GTP"/>
    <property type="match status" value="1"/>
</dbReference>
<dbReference type="PANTHER" id="PTHR43721:SF22">
    <property type="entry name" value="ELONGATION FACTOR TU, MITOCHONDRIAL"/>
    <property type="match status" value="1"/>
</dbReference>
<dbReference type="PANTHER" id="PTHR43721">
    <property type="entry name" value="ELONGATION FACTOR TU-RELATED"/>
    <property type="match status" value="1"/>
</dbReference>
<dbReference type="Pfam" id="PF00009">
    <property type="entry name" value="GTP_EFTU"/>
    <property type="match status" value="1"/>
</dbReference>
<dbReference type="Pfam" id="PF03144">
    <property type="entry name" value="GTP_EFTU_D2"/>
    <property type="match status" value="1"/>
</dbReference>
<dbReference type="Pfam" id="PF03143">
    <property type="entry name" value="GTP_EFTU_D3"/>
    <property type="match status" value="1"/>
</dbReference>
<dbReference type="PRINTS" id="PR00315">
    <property type="entry name" value="ELONGATNFCT"/>
</dbReference>
<dbReference type="SUPFAM" id="SSF50465">
    <property type="entry name" value="EF-Tu/eEF-1alpha/eIF2-gamma C-terminal domain"/>
    <property type="match status" value="1"/>
</dbReference>
<dbReference type="SUPFAM" id="SSF52540">
    <property type="entry name" value="P-loop containing nucleoside triphosphate hydrolases"/>
    <property type="match status" value="1"/>
</dbReference>
<dbReference type="SUPFAM" id="SSF50447">
    <property type="entry name" value="Translation proteins"/>
    <property type="match status" value="1"/>
</dbReference>
<dbReference type="PROSITE" id="PS00301">
    <property type="entry name" value="G_TR_1"/>
    <property type="match status" value="1"/>
</dbReference>
<dbReference type="PROSITE" id="PS51722">
    <property type="entry name" value="G_TR_2"/>
    <property type="match status" value="1"/>
</dbReference>
<comment type="function">
    <text evidence="2">GTP hydrolase that promotes the GTP-dependent binding of aminoacyl-tRNA to the A-site of ribosomes during protein biosynthesis.</text>
</comment>
<comment type="catalytic activity">
    <reaction evidence="2">
        <text>GTP + H2O = GDP + phosphate + H(+)</text>
        <dbReference type="Rhea" id="RHEA:19669"/>
        <dbReference type="ChEBI" id="CHEBI:15377"/>
        <dbReference type="ChEBI" id="CHEBI:15378"/>
        <dbReference type="ChEBI" id="CHEBI:37565"/>
        <dbReference type="ChEBI" id="CHEBI:43474"/>
        <dbReference type="ChEBI" id="CHEBI:58189"/>
        <dbReference type="EC" id="3.6.5.3"/>
    </reaction>
    <physiologicalReaction direction="left-to-right" evidence="2">
        <dbReference type="Rhea" id="RHEA:19670"/>
    </physiologicalReaction>
</comment>
<comment type="subunit">
    <text evidence="2">Monomer.</text>
</comment>
<comment type="subcellular location">
    <subcellularLocation>
        <location evidence="2">Cytoplasm</location>
    </subcellularLocation>
</comment>
<comment type="similarity">
    <text evidence="2">Belongs to the TRAFAC class translation factor GTPase superfamily. Classic translation factor GTPase family. EF-Tu/EF-1A subfamily.</text>
</comment>
<reference key="1">
    <citation type="submission" date="2007-10" db="EMBL/GenBank/DDBJ databases">
        <title>Complete sequence of Shewanella pealeana ATCC 700345.</title>
        <authorList>
            <consortium name="US DOE Joint Genome Institute"/>
            <person name="Copeland A."/>
            <person name="Lucas S."/>
            <person name="Lapidus A."/>
            <person name="Barry K."/>
            <person name="Glavina del Rio T."/>
            <person name="Dalin E."/>
            <person name="Tice H."/>
            <person name="Pitluck S."/>
            <person name="Chertkov O."/>
            <person name="Brettin T."/>
            <person name="Bruce D."/>
            <person name="Detter J.C."/>
            <person name="Han C."/>
            <person name="Schmutz J."/>
            <person name="Larimer F."/>
            <person name="Land M."/>
            <person name="Hauser L."/>
            <person name="Kyrpides N."/>
            <person name="Kim E."/>
            <person name="Zhao J.-S.Z."/>
            <person name="Manno D."/>
            <person name="Hawari J."/>
            <person name="Richardson P."/>
        </authorList>
    </citation>
    <scope>NUCLEOTIDE SEQUENCE [LARGE SCALE GENOMIC DNA]</scope>
    <source>
        <strain>ATCC 700345 / ANG-SQ1</strain>
    </source>
</reference>
<feature type="chain" id="PRO_0000337531" description="Elongation factor Tu">
    <location>
        <begin position="1"/>
        <end position="394"/>
    </location>
</feature>
<feature type="domain" description="tr-type G">
    <location>
        <begin position="10"/>
        <end position="204"/>
    </location>
</feature>
<feature type="region of interest" description="G1" evidence="1">
    <location>
        <begin position="19"/>
        <end position="26"/>
    </location>
</feature>
<feature type="region of interest" description="G2" evidence="1">
    <location>
        <begin position="60"/>
        <end position="64"/>
    </location>
</feature>
<feature type="region of interest" description="G3" evidence="1">
    <location>
        <begin position="81"/>
        <end position="84"/>
    </location>
</feature>
<feature type="region of interest" description="G4" evidence="1">
    <location>
        <begin position="136"/>
        <end position="139"/>
    </location>
</feature>
<feature type="region of interest" description="G5" evidence="1">
    <location>
        <begin position="174"/>
        <end position="176"/>
    </location>
</feature>
<feature type="binding site" evidence="2">
    <location>
        <begin position="19"/>
        <end position="26"/>
    </location>
    <ligand>
        <name>GTP</name>
        <dbReference type="ChEBI" id="CHEBI:37565"/>
    </ligand>
</feature>
<feature type="binding site" evidence="2">
    <location>
        <position position="26"/>
    </location>
    <ligand>
        <name>Mg(2+)</name>
        <dbReference type="ChEBI" id="CHEBI:18420"/>
    </ligand>
</feature>
<feature type="binding site" evidence="2">
    <location>
        <begin position="81"/>
        <end position="85"/>
    </location>
    <ligand>
        <name>GTP</name>
        <dbReference type="ChEBI" id="CHEBI:37565"/>
    </ligand>
</feature>
<feature type="binding site" evidence="2">
    <location>
        <begin position="136"/>
        <end position="139"/>
    </location>
    <ligand>
        <name>GTP</name>
        <dbReference type="ChEBI" id="CHEBI:37565"/>
    </ligand>
</feature>